<organism>
    <name type="scientific">Cereibacter sphaeroides (strain KD131 / KCTC 12085)</name>
    <name type="common">Rhodobacter sphaeroides</name>
    <dbReference type="NCBI Taxonomy" id="557760"/>
    <lineage>
        <taxon>Bacteria</taxon>
        <taxon>Pseudomonadati</taxon>
        <taxon>Pseudomonadota</taxon>
        <taxon>Alphaproteobacteria</taxon>
        <taxon>Rhodobacterales</taxon>
        <taxon>Paracoccaceae</taxon>
        <taxon>Cereibacter</taxon>
    </lineage>
</organism>
<keyword id="KW-0378">Hydrolase</keyword>
<proteinExistence type="inferred from homology"/>
<comment type="function">
    <text evidence="1">Converts GTP to 7,8-dihydroneopterin triphosphate.</text>
</comment>
<comment type="catalytic activity">
    <reaction evidence="1">
        <text>GTP + H2O = 7,8-dihydroneopterin 3'-triphosphate + formate + H(+)</text>
        <dbReference type="Rhea" id="RHEA:17473"/>
        <dbReference type="ChEBI" id="CHEBI:15377"/>
        <dbReference type="ChEBI" id="CHEBI:15378"/>
        <dbReference type="ChEBI" id="CHEBI:15740"/>
        <dbReference type="ChEBI" id="CHEBI:37565"/>
        <dbReference type="ChEBI" id="CHEBI:58462"/>
        <dbReference type="EC" id="3.5.4.16"/>
    </reaction>
</comment>
<comment type="pathway">
    <text evidence="1">Cofactor biosynthesis; 7,8-dihydroneopterin triphosphate biosynthesis; 7,8-dihydroneopterin triphosphate from GTP: step 1/1.</text>
</comment>
<comment type="similarity">
    <text evidence="1">Belongs to the GTP cyclohydrolase IV family.</text>
</comment>
<dbReference type="EC" id="3.5.4.16" evidence="1"/>
<dbReference type="EMBL" id="CP001150">
    <property type="protein sequence ID" value="ACM00020.1"/>
    <property type="molecule type" value="Genomic_DNA"/>
</dbReference>
<dbReference type="RefSeq" id="WP_012643520.1">
    <property type="nucleotide sequence ID" value="NC_011963.1"/>
</dbReference>
<dbReference type="SMR" id="B9KM22"/>
<dbReference type="GeneID" id="67445641"/>
<dbReference type="KEGG" id="rsk:RSKD131_0160"/>
<dbReference type="HOGENOM" id="CLU_062816_0_1_5"/>
<dbReference type="UniPathway" id="UPA00848">
    <property type="reaction ID" value="UER00151"/>
</dbReference>
<dbReference type="GO" id="GO:0003934">
    <property type="term" value="F:GTP cyclohydrolase I activity"/>
    <property type="evidence" value="ECO:0007669"/>
    <property type="project" value="UniProtKB-UniRule"/>
</dbReference>
<dbReference type="GO" id="GO:0046654">
    <property type="term" value="P:tetrahydrofolate biosynthetic process"/>
    <property type="evidence" value="ECO:0007669"/>
    <property type="project" value="UniProtKB-UniRule"/>
</dbReference>
<dbReference type="Gene3D" id="3.10.270.10">
    <property type="entry name" value="Urate Oxidase"/>
    <property type="match status" value="1"/>
</dbReference>
<dbReference type="HAMAP" id="MF_01527_B">
    <property type="entry name" value="GTP_cyclohydrol_B"/>
    <property type="match status" value="1"/>
</dbReference>
<dbReference type="InterPro" id="IPR022838">
    <property type="entry name" value="GTP_cyclohydrolase_FolE2"/>
</dbReference>
<dbReference type="InterPro" id="IPR003801">
    <property type="entry name" value="GTP_cyclohydrolase_FolE2/MptA"/>
</dbReference>
<dbReference type="NCBIfam" id="NF010200">
    <property type="entry name" value="PRK13674.1-1"/>
    <property type="match status" value="1"/>
</dbReference>
<dbReference type="PANTHER" id="PTHR36445">
    <property type="entry name" value="GTP CYCLOHYDROLASE MPTA"/>
    <property type="match status" value="1"/>
</dbReference>
<dbReference type="PANTHER" id="PTHR36445:SF1">
    <property type="entry name" value="GTP CYCLOHYDROLASE MPTA"/>
    <property type="match status" value="1"/>
</dbReference>
<dbReference type="Pfam" id="PF02649">
    <property type="entry name" value="GCHY-1"/>
    <property type="match status" value="1"/>
</dbReference>
<sequence>MNILTPVAERLPSREEAEEALAVLRRWATHTPASDVAALAPEAPALVYPELSRSYPRAFTVDEAYKASLPDLQNGPASLIVGAKAVIQHVGISNFRLPIRYHTRDNGDLQLETSVTGTVSLEAEKKGINMSRIMRSFYAHAEQAFSFEVIERALEDYKRDLESFDARIQMRFSFPVKVPSLRSGLTGWQYYDIALELVDRGGVRKEIMHLDFVYSSTCPCSLELSEHARRERGQLATPHSQRSVARISVEVRQGKCLWFEDLLDLVRSAVPTETQVMVKREDEQAFAELNAANPIFVEDAARSFCQALQSDPRIGDFRVVASHQESLHSHDAVSVLTEGPTFAAESLDPRLFSSLYHVG</sequence>
<evidence type="ECO:0000255" key="1">
    <source>
        <dbReference type="HAMAP-Rule" id="MF_01527"/>
    </source>
</evidence>
<feature type="chain" id="PRO_1000185156" description="GTP cyclohydrolase FolE2">
    <location>
        <begin position="1"/>
        <end position="359"/>
    </location>
</feature>
<feature type="site" description="May be catalytically important" evidence="1">
    <location>
        <position position="218"/>
    </location>
</feature>
<gene>
    <name evidence="1" type="primary">folE2</name>
    <name type="ordered locus">RSKD131_0160</name>
</gene>
<reference key="1">
    <citation type="journal article" date="2009" name="J. Bacteriol.">
        <title>Complete genome sequence of Rhodobacter sphaeroides KD131.</title>
        <authorList>
            <person name="Lim S.-K."/>
            <person name="Kim S.J."/>
            <person name="Cha S.H."/>
            <person name="Oh Y.-K."/>
            <person name="Rhee H.-J."/>
            <person name="Kim M.-S."/>
            <person name="Lee J.K."/>
        </authorList>
    </citation>
    <scope>NUCLEOTIDE SEQUENCE [LARGE SCALE GENOMIC DNA]</scope>
    <source>
        <strain>KD131 / KCTC 12085</strain>
    </source>
</reference>
<accession>B9KM22</accession>
<name>GCH4_CERSK</name>
<protein>
    <recommendedName>
        <fullName evidence="1">GTP cyclohydrolase FolE2</fullName>
        <ecNumber evidence="1">3.5.4.16</ecNumber>
    </recommendedName>
</protein>